<reference key="1">
    <citation type="journal article" date="2007" name="PLoS Genet.">
        <title>Genome analysis of Minibacterium massiliensis highlights the convergent evolution of water-living bacteria.</title>
        <authorList>
            <person name="Audic S."/>
            <person name="Robert C."/>
            <person name="Campagna B."/>
            <person name="Parinello H."/>
            <person name="Claverie J.-M."/>
            <person name="Raoult D."/>
            <person name="Drancourt M."/>
        </authorList>
    </citation>
    <scope>NUCLEOTIDE SEQUENCE [LARGE SCALE GENOMIC DNA]</scope>
    <source>
        <strain>Marseille</strain>
    </source>
</reference>
<organism>
    <name type="scientific">Janthinobacterium sp. (strain Marseille)</name>
    <name type="common">Minibacterium massiliensis</name>
    <dbReference type="NCBI Taxonomy" id="375286"/>
    <lineage>
        <taxon>Bacteria</taxon>
        <taxon>Pseudomonadati</taxon>
        <taxon>Pseudomonadota</taxon>
        <taxon>Betaproteobacteria</taxon>
        <taxon>Burkholderiales</taxon>
        <taxon>Oxalobacteraceae</taxon>
        <taxon>Janthinobacterium</taxon>
    </lineage>
</organism>
<protein>
    <recommendedName>
        <fullName evidence="1">Recombination protein RecR</fullName>
    </recommendedName>
</protein>
<name>RECR_JANMA</name>
<accession>A6T0H1</accession>
<proteinExistence type="inferred from homology"/>
<sequence length="198" mass="21698">MKTPSSLDFLTEALRRLPGVGPKSAQRMAYHLMQHDRDGAAMLGRALSQAVEKVQHCAMCNTFTEHEVCETCLDAERNPALLCVVETPGDQLMIEQTLTFKGLYFVLMGRLSPLDGIGPKDIHLEKLISRATDGIVQEVVLATNFTNEGEATAHYISETLKARGLKVSRLARGVPVGGELEYVDAGTIARAMLDRRTT</sequence>
<comment type="function">
    <text evidence="1">May play a role in DNA repair. It seems to be involved in an RecBC-independent recombinational process of DNA repair. It may act with RecF and RecO.</text>
</comment>
<comment type="similarity">
    <text evidence="1">Belongs to the RecR family.</text>
</comment>
<feature type="chain" id="PRO_0000322899" description="Recombination protein RecR">
    <location>
        <begin position="1"/>
        <end position="198"/>
    </location>
</feature>
<feature type="domain" description="Toprim" evidence="1">
    <location>
        <begin position="80"/>
        <end position="175"/>
    </location>
</feature>
<feature type="zinc finger region" description="C4-type" evidence="1">
    <location>
        <begin position="57"/>
        <end position="72"/>
    </location>
</feature>
<gene>
    <name evidence="1" type="primary">recR</name>
    <name type="ordered locus">mma_2328</name>
</gene>
<dbReference type="EMBL" id="CP000269">
    <property type="protein sequence ID" value="ABR89322.1"/>
    <property type="molecule type" value="Genomic_DNA"/>
</dbReference>
<dbReference type="RefSeq" id="WP_012080181.1">
    <property type="nucleotide sequence ID" value="NC_009659.1"/>
</dbReference>
<dbReference type="SMR" id="A6T0H1"/>
<dbReference type="STRING" id="375286.mma_2328"/>
<dbReference type="KEGG" id="mms:mma_2328"/>
<dbReference type="eggNOG" id="COG0353">
    <property type="taxonomic scope" value="Bacteria"/>
</dbReference>
<dbReference type="HOGENOM" id="CLU_060739_1_2_4"/>
<dbReference type="OrthoDB" id="9802672at2"/>
<dbReference type="Proteomes" id="UP000006388">
    <property type="component" value="Chromosome"/>
</dbReference>
<dbReference type="GO" id="GO:0003677">
    <property type="term" value="F:DNA binding"/>
    <property type="evidence" value="ECO:0007669"/>
    <property type="project" value="UniProtKB-UniRule"/>
</dbReference>
<dbReference type="GO" id="GO:0008270">
    <property type="term" value="F:zinc ion binding"/>
    <property type="evidence" value="ECO:0007669"/>
    <property type="project" value="UniProtKB-KW"/>
</dbReference>
<dbReference type="GO" id="GO:0006310">
    <property type="term" value="P:DNA recombination"/>
    <property type="evidence" value="ECO:0007669"/>
    <property type="project" value="UniProtKB-UniRule"/>
</dbReference>
<dbReference type="GO" id="GO:0006281">
    <property type="term" value="P:DNA repair"/>
    <property type="evidence" value="ECO:0007669"/>
    <property type="project" value="UniProtKB-UniRule"/>
</dbReference>
<dbReference type="CDD" id="cd01025">
    <property type="entry name" value="TOPRIM_recR"/>
    <property type="match status" value="1"/>
</dbReference>
<dbReference type="Gene3D" id="3.40.1360.10">
    <property type="match status" value="1"/>
</dbReference>
<dbReference type="Gene3D" id="6.10.250.240">
    <property type="match status" value="1"/>
</dbReference>
<dbReference type="Gene3D" id="1.10.8.420">
    <property type="entry name" value="RecR Domain 1"/>
    <property type="match status" value="1"/>
</dbReference>
<dbReference type="HAMAP" id="MF_00017">
    <property type="entry name" value="RecR"/>
    <property type="match status" value="1"/>
</dbReference>
<dbReference type="InterPro" id="IPR000093">
    <property type="entry name" value="DNA_Rcmb_RecR"/>
</dbReference>
<dbReference type="InterPro" id="IPR023627">
    <property type="entry name" value="Rcmb_RecR"/>
</dbReference>
<dbReference type="InterPro" id="IPR015967">
    <property type="entry name" value="Rcmb_RecR_Znf"/>
</dbReference>
<dbReference type="InterPro" id="IPR006171">
    <property type="entry name" value="TOPRIM_dom"/>
</dbReference>
<dbReference type="InterPro" id="IPR034137">
    <property type="entry name" value="TOPRIM_RecR"/>
</dbReference>
<dbReference type="NCBIfam" id="TIGR00615">
    <property type="entry name" value="recR"/>
    <property type="match status" value="1"/>
</dbReference>
<dbReference type="PANTHER" id="PTHR30446">
    <property type="entry name" value="RECOMBINATION PROTEIN RECR"/>
    <property type="match status" value="1"/>
</dbReference>
<dbReference type="PANTHER" id="PTHR30446:SF0">
    <property type="entry name" value="RECOMBINATION PROTEIN RECR"/>
    <property type="match status" value="1"/>
</dbReference>
<dbReference type="Pfam" id="PF21175">
    <property type="entry name" value="RecR_C"/>
    <property type="match status" value="1"/>
</dbReference>
<dbReference type="Pfam" id="PF21176">
    <property type="entry name" value="RecR_HhH"/>
    <property type="match status" value="1"/>
</dbReference>
<dbReference type="Pfam" id="PF02132">
    <property type="entry name" value="RecR_ZnF"/>
    <property type="match status" value="1"/>
</dbReference>
<dbReference type="Pfam" id="PF13662">
    <property type="entry name" value="Toprim_4"/>
    <property type="match status" value="1"/>
</dbReference>
<dbReference type="SMART" id="SM00493">
    <property type="entry name" value="TOPRIM"/>
    <property type="match status" value="1"/>
</dbReference>
<dbReference type="SUPFAM" id="SSF111304">
    <property type="entry name" value="Recombination protein RecR"/>
    <property type="match status" value="1"/>
</dbReference>
<dbReference type="PROSITE" id="PS50880">
    <property type="entry name" value="TOPRIM"/>
    <property type="match status" value="1"/>
</dbReference>
<evidence type="ECO:0000255" key="1">
    <source>
        <dbReference type="HAMAP-Rule" id="MF_00017"/>
    </source>
</evidence>
<keyword id="KW-0227">DNA damage</keyword>
<keyword id="KW-0233">DNA recombination</keyword>
<keyword id="KW-0234">DNA repair</keyword>
<keyword id="KW-0479">Metal-binding</keyword>
<keyword id="KW-0862">Zinc</keyword>
<keyword id="KW-0863">Zinc-finger</keyword>